<comment type="function">
    <text evidence="1">Involved in mRNA degradation. Catalyzes the phosphorolysis of single-stranded polyribonucleotides processively in the 3'- to 5'-direction.</text>
</comment>
<comment type="catalytic activity">
    <reaction evidence="1">
        <text>RNA(n+1) + phosphate = RNA(n) + a ribonucleoside 5'-diphosphate</text>
        <dbReference type="Rhea" id="RHEA:22096"/>
        <dbReference type="Rhea" id="RHEA-COMP:14527"/>
        <dbReference type="Rhea" id="RHEA-COMP:17342"/>
        <dbReference type="ChEBI" id="CHEBI:43474"/>
        <dbReference type="ChEBI" id="CHEBI:57930"/>
        <dbReference type="ChEBI" id="CHEBI:140395"/>
        <dbReference type="EC" id="2.7.7.8"/>
    </reaction>
</comment>
<comment type="cofactor">
    <cofactor evidence="1">
        <name>Mg(2+)</name>
        <dbReference type="ChEBI" id="CHEBI:18420"/>
    </cofactor>
</comment>
<comment type="subunit">
    <text evidence="1">Component of the RNA degradosome, which is a multiprotein complex involved in RNA processing and mRNA degradation.</text>
</comment>
<comment type="subcellular location">
    <subcellularLocation>
        <location evidence="1">Cytoplasm</location>
    </subcellularLocation>
</comment>
<comment type="similarity">
    <text evidence="1">Belongs to the polyribonucleotide nucleotidyltransferase family.</text>
</comment>
<name>PNP_SERP5</name>
<dbReference type="EC" id="2.7.7.8" evidence="1"/>
<dbReference type="EMBL" id="CP000826">
    <property type="protein sequence ID" value="ABV39601.1"/>
    <property type="molecule type" value="Genomic_DNA"/>
</dbReference>
<dbReference type="SMR" id="A8G911"/>
<dbReference type="STRING" id="399741.Spro_0493"/>
<dbReference type="KEGG" id="spe:Spro_0493"/>
<dbReference type="eggNOG" id="COG1185">
    <property type="taxonomic scope" value="Bacteria"/>
</dbReference>
<dbReference type="HOGENOM" id="CLU_004217_2_2_6"/>
<dbReference type="OrthoDB" id="9804305at2"/>
<dbReference type="GO" id="GO:0005829">
    <property type="term" value="C:cytosol"/>
    <property type="evidence" value="ECO:0007669"/>
    <property type="project" value="TreeGrafter"/>
</dbReference>
<dbReference type="GO" id="GO:0000175">
    <property type="term" value="F:3'-5'-RNA exonuclease activity"/>
    <property type="evidence" value="ECO:0007669"/>
    <property type="project" value="TreeGrafter"/>
</dbReference>
<dbReference type="GO" id="GO:0000287">
    <property type="term" value="F:magnesium ion binding"/>
    <property type="evidence" value="ECO:0007669"/>
    <property type="project" value="UniProtKB-UniRule"/>
</dbReference>
<dbReference type="GO" id="GO:0004654">
    <property type="term" value="F:polyribonucleotide nucleotidyltransferase activity"/>
    <property type="evidence" value="ECO:0007669"/>
    <property type="project" value="UniProtKB-UniRule"/>
</dbReference>
<dbReference type="GO" id="GO:0003723">
    <property type="term" value="F:RNA binding"/>
    <property type="evidence" value="ECO:0007669"/>
    <property type="project" value="UniProtKB-UniRule"/>
</dbReference>
<dbReference type="GO" id="GO:0006402">
    <property type="term" value="P:mRNA catabolic process"/>
    <property type="evidence" value="ECO:0007669"/>
    <property type="project" value="UniProtKB-UniRule"/>
</dbReference>
<dbReference type="GO" id="GO:0006396">
    <property type="term" value="P:RNA processing"/>
    <property type="evidence" value="ECO:0007669"/>
    <property type="project" value="InterPro"/>
</dbReference>
<dbReference type="CDD" id="cd02393">
    <property type="entry name" value="KH-I_PNPase"/>
    <property type="match status" value="1"/>
</dbReference>
<dbReference type="CDD" id="cd11363">
    <property type="entry name" value="RNase_PH_PNPase_1"/>
    <property type="match status" value="1"/>
</dbReference>
<dbReference type="CDD" id="cd11364">
    <property type="entry name" value="RNase_PH_PNPase_2"/>
    <property type="match status" value="1"/>
</dbReference>
<dbReference type="CDD" id="cd04472">
    <property type="entry name" value="S1_PNPase"/>
    <property type="match status" value="1"/>
</dbReference>
<dbReference type="FunFam" id="2.40.50.140:FF:000023">
    <property type="entry name" value="Polyribonucleotide nucleotidyltransferase"/>
    <property type="match status" value="1"/>
</dbReference>
<dbReference type="FunFam" id="3.30.1370.10:FF:000001">
    <property type="entry name" value="Polyribonucleotide nucleotidyltransferase"/>
    <property type="match status" value="1"/>
</dbReference>
<dbReference type="FunFam" id="3.30.230.70:FF:000001">
    <property type="entry name" value="Polyribonucleotide nucleotidyltransferase"/>
    <property type="match status" value="1"/>
</dbReference>
<dbReference type="FunFam" id="3.30.230.70:FF:000002">
    <property type="entry name" value="Polyribonucleotide nucleotidyltransferase"/>
    <property type="match status" value="1"/>
</dbReference>
<dbReference type="Gene3D" id="3.30.230.70">
    <property type="entry name" value="GHMP Kinase, N-terminal domain"/>
    <property type="match status" value="2"/>
</dbReference>
<dbReference type="Gene3D" id="3.30.1370.10">
    <property type="entry name" value="K Homology domain, type 1"/>
    <property type="match status" value="1"/>
</dbReference>
<dbReference type="Gene3D" id="2.40.50.140">
    <property type="entry name" value="Nucleic acid-binding proteins"/>
    <property type="match status" value="1"/>
</dbReference>
<dbReference type="HAMAP" id="MF_01595">
    <property type="entry name" value="PNPase"/>
    <property type="match status" value="1"/>
</dbReference>
<dbReference type="InterPro" id="IPR001247">
    <property type="entry name" value="ExoRNase_PH_dom1"/>
</dbReference>
<dbReference type="InterPro" id="IPR015847">
    <property type="entry name" value="ExoRNase_PH_dom2"/>
</dbReference>
<dbReference type="InterPro" id="IPR036345">
    <property type="entry name" value="ExoRNase_PH_dom2_sf"/>
</dbReference>
<dbReference type="InterPro" id="IPR004087">
    <property type="entry name" value="KH_dom"/>
</dbReference>
<dbReference type="InterPro" id="IPR004088">
    <property type="entry name" value="KH_dom_type_1"/>
</dbReference>
<dbReference type="InterPro" id="IPR036612">
    <property type="entry name" value="KH_dom_type_1_sf"/>
</dbReference>
<dbReference type="InterPro" id="IPR012340">
    <property type="entry name" value="NA-bd_OB-fold"/>
</dbReference>
<dbReference type="InterPro" id="IPR012162">
    <property type="entry name" value="PNPase"/>
</dbReference>
<dbReference type="InterPro" id="IPR027408">
    <property type="entry name" value="PNPase/RNase_PH_dom_sf"/>
</dbReference>
<dbReference type="InterPro" id="IPR015848">
    <property type="entry name" value="PNPase_PH_RNA-bd_bac/org-type"/>
</dbReference>
<dbReference type="InterPro" id="IPR020568">
    <property type="entry name" value="Ribosomal_Su5_D2-typ_SF"/>
</dbReference>
<dbReference type="InterPro" id="IPR003029">
    <property type="entry name" value="S1_domain"/>
</dbReference>
<dbReference type="NCBIfam" id="TIGR03591">
    <property type="entry name" value="polynuc_phos"/>
    <property type="match status" value="1"/>
</dbReference>
<dbReference type="NCBIfam" id="NF008805">
    <property type="entry name" value="PRK11824.1"/>
    <property type="match status" value="1"/>
</dbReference>
<dbReference type="PANTHER" id="PTHR11252">
    <property type="entry name" value="POLYRIBONUCLEOTIDE NUCLEOTIDYLTRANSFERASE"/>
    <property type="match status" value="1"/>
</dbReference>
<dbReference type="PANTHER" id="PTHR11252:SF0">
    <property type="entry name" value="POLYRIBONUCLEOTIDE NUCLEOTIDYLTRANSFERASE 1, MITOCHONDRIAL"/>
    <property type="match status" value="1"/>
</dbReference>
<dbReference type="Pfam" id="PF00013">
    <property type="entry name" value="KH_1"/>
    <property type="match status" value="1"/>
</dbReference>
<dbReference type="Pfam" id="PF03726">
    <property type="entry name" value="PNPase"/>
    <property type="match status" value="1"/>
</dbReference>
<dbReference type="Pfam" id="PF01138">
    <property type="entry name" value="RNase_PH"/>
    <property type="match status" value="2"/>
</dbReference>
<dbReference type="Pfam" id="PF03725">
    <property type="entry name" value="RNase_PH_C"/>
    <property type="match status" value="2"/>
</dbReference>
<dbReference type="Pfam" id="PF00575">
    <property type="entry name" value="S1"/>
    <property type="match status" value="1"/>
</dbReference>
<dbReference type="PIRSF" id="PIRSF005499">
    <property type="entry name" value="PNPase"/>
    <property type="match status" value="1"/>
</dbReference>
<dbReference type="SMART" id="SM00322">
    <property type="entry name" value="KH"/>
    <property type="match status" value="1"/>
</dbReference>
<dbReference type="SMART" id="SM00316">
    <property type="entry name" value="S1"/>
    <property type="match status" value="1"/>
</dbReference>
<dbReference type="SUPFAM" id="SSF54791">
    <property type="entry name" value="Eukaryotic type KH-domain (KH-domain type I)"/>
    <property type="match status" value="1"/>
</dbReference>
<dbReference type="SUPFAM" id="SSF50249">
    <property type="entry name" value="Nucleic acid-binding proteins"/>
    <property type="match status" value="1"/>
</dbReference>
<dbReference type="SUPFAM" id="SSF55666">
    <property type="entry name" value="Ribonuclease PH domain 2-like"/>
    <property type="match status" value="2"/>
</dbReference>
<dbReference type="SUPFAM" id="SSF54211">
    <property type="entry name" value="Ribosomal protein S5 domain 2-like"/>
    <property type="match status" value="2"/>
</dbReference>
<dbReference type="PROSITE" id="PS50084">
    <property type="entry name" value="KH_TYPE_1"/>
    <property type="match status" value="1"/>
</dbReference>
<dbReference type="PROSITE" id="PS50126">
    <property type="entry name" value="S1"/>
    <property type="match status" value="1"/>
</dbReference>
<gene>
    <name evidence="1" type="primary">pnp</name>
    <name type="ordered locus">Spro_0493</name>
</gene>
<proteinExistence type="inferred from homology"/>
<evidence type="ECO:0000255" key="1">
    <source>
        <dbReference type="HAMAP-Rule" id="MF_01595"/>
    </source>
</evidence>
<feature type="chain" id="PRO_0000329835" description="Polyribonucleotide nucleotidyltransferase">
    <location>
        <begin position="1"/>
        <end position="705"/>
    </location>
</feature>
<feature type="domain" description="KH" evidence="1">
    <location>
        <begin position="553"/>
        <end position="612"/>
    </location>
</feature>
<feature type="domain" description="S1 motif" evidence="1">
    <location>
        <begin position="622"/>
        <end position="690"/>
    </location>
</feature>
<feature type="binding site" evidence="1">
    <location>
        <position position="486"/>
    </location>
    <ligand>
        <name>Mg(2+)</name>
        <dbReference type="ChEBI" id="CHEBI:18420"/>
    </ligand>
</feature>
<feature type="binding site" evidence="1">
    <location>
        <position position="492"/>
    </location>
    <ligand>
        <name>Mg(2+)</name>
        <dbReference type="ChEBI" id="CHEBI:18420"/>
    </ligand>
</feature>
<accession>A8G911</accession>
<reference key="1">
    <citation type="submission" date="2007-09" db="EMBL/GenBank/DDBJ databases">
        <title>Complete sequence of chromosome of Serratia proteamaculans 568.</title>
        <authorList>
            <consortium name="US DOE Joint Genome Institute"/>
            <person name="Copeland A."/>
            <person name="Lucas S."/>
            <person name="Lapidus A."/>
            <person name="Barry K."/>
            <person name="Glavina del Rio T."/>
            <person name="Dalin E."/>
            <person name="Tice H."/>
            <person name="Pitluck S."/>
            <person name="Chain P."/>
            <person name="Malfatti S."/>
            <person name="Shin M."/>
            <person name="Vergez L."/>
            <person name="Schmutz J."/>
            <person name="Larimer F."/>
            <person name="Land M."/>
            <person name="Hauser L."/>
            <person name="Kyrpides N."/>
            <person name="Kim E."/>
            <person name="Taghavi S."/>
            <person name="Newman L."/>
            <person name="Vangronsveld J."/>
            <person name="van der Lelie D."/>
            <person name="Richardson P."/>
        </authorList>
    </citation>
    <scope>NUCLEOTIDE SEQUENCE [LARGE SCALE GENOMIC DNA]</scope>
    <source>
        <strain>568</strain>
    </source>
</reference>
<sequence length="705" mass="76251">MLTPIIRKFQYGQHTLTIETGMMARQATAAVMVSMDDTAVFVTVVGQKKAKPGQSFFPLTVNYQERTYAAGRIPGSFFRREGRPSEGETLTSRLIDRPIRPLFPDSFLNEVQVIATVVSLNPQVNPDIVAMIGASAALSLSGIPFNGPIGSARVGYINNQYVLNPTSDELKESSLDLVVAGTAGAVLMVESEADVLSEDQMLGAVVFGHEQQQIVIENINSLVAEAGKAKWDWQAPAVNEALHARVAELAEGRLGDAYHITEKQERYAQVDAIKSSVVETLLAQDETLDVSEIQDILGSVEKNVVRSRVLRGEPRIDGREKDMIRGLDVRTGVLPRTHGSALFTRGETQALVTATLGTARDAQNLDELMGEKTDSFLFHYNFPPYSVGETGMVGSPKRREIGHGRLAKRGVLAMMPKPEDFPYTVRVVSEITESNGSSSMASVCGASLALMDAGVPIKAAVAGIAMGLVKEQDNFVVLSDILGDEDHLGDMDFKVAGSRDGITALQMDIKIEGITREIMQVALNQAKGARLHILGVMEQAISTPRGDISQFAPRIHTIRINPDKIKDVIGKGGSVIRALTEETGTTIEIEDDGTVKIAATDGEKAKFAIRRIEEITAEIEVGRIYQGKVTRIVDFGAFVAIGGGKEGLVHISQIADKRVEKVTDYLQMGQEVPVKVLEVDRQGRVRLSIKEATAPEAGSPAPEAE</sequence>
<organism>
    <name type="scientific">Serratia proteamaculans (strain 568)</name>
    <dbReference type="NCBI Taxonomy" id="399741"/>
    <lineage>
        <taxon>Bacteria</taxon>
        <taxon>Pseudomonadati</taxon>
        <taxon>Pseudomonadota</taxon>
        <taxon>Gammaproteobacteria</taxon>
        <taxon>Enterobacterales</taxon>
        <taxon>Yersiniaceae</taxon>
        <taxon>Serratia</taxon>
    </lineage>
</organism>
<keyword id="KW-0963">Cytoplasm</keyword>
<keyword id="KW-0460">Magnesium</keyword>
<keyword id="KW-0479">Metal-binding</keyword>
<keyword id="KW-0548">Nucleotidyltransferase</keyword>
<keyword id="KW-0694">RNA-binding</keyword>
<keyword id="KW-0808">Transferase</keyword>
<protein>
    <recommendedName>
        <fullName evidence="1">Polyribonucleotide nucleotidyltransferase</fullName>
        <ecNumber evidence="1">2.7.7.8</ecNumber>
    </recommendedName>
    <alternativeName>
        <fullName evidence="1">Polynucleotide phosphorylase</fullName>
        <shortName evidence="1">PNPase</shortName>
    </alternativeName>
</protein>